<accession>Q83AR1</accession>
<reference key="1">
    <citation type="journal article" date="2003" name="Proc. Natl. Acad. Sci. U.S.A.">
        <title>Complete genome sequence of the Q-fever pathogen, Coxiella burnetii.</title>
        <authorList>
            <person name="Seshadri R."/>
            <person name="Paulsen I.T."/>
            <person name="Eisen J.A."/>
            <person name="Read T.D."/>
            <person name="Nelson K.E."/>
            <person name="Nelson W.C."/>
            <person name="Ward N.L."/>
            <person name="Tettelin H."/>
            <person name="Davidsen T.M."/>
            <person name="Beanan M.J."/>
            <person name="DeBoy R.T."/>
            <person name="Daugherty S.C."/>
            <person name="Brinkac L.M."/>
            <person name="Madupu R."/>
            <person name="Dodson R.J."/>
            <person name="Khouri H.M."/>
            <person name="Lee K.H."/>
            <person name="Carty H.A."/>
            <person name="Scanlan D."/>
            <person name="Heinzen R.A."/>
            <person name="Thompson H.A."/>
            <person name="Samuel J.E."/>
            <person name="Fraser C.M."/>
            <person name="Heidelberg J.F."/>
        </authorList>
    </citation>
    <scope>NUCLEOTIDE SEQUENCE [LARGE SCALE GENOMIC DNA]</scope>
    <source>
        <strain>RSA 493 / Nine Mile phase I</strain>
    </source>
</reference>
<feature type="chain" id="PRO_0000309269" description="Uncharacterized protein CBU_1819">
    <location>
        <begin position="1"/>
        <end position="377"/>
    </location>
</feature>
<feature type="transmembrane region" description="Helical" evidence="1">
    <location>
        <begin position="71"/>
        <end position="91"/>
    </location>
</feature>
<feature type="transmembrane region" description="Helical" evidence="1">
    <location>
        <begin position="140"/>
        <end position="160"/>
    </location>
</feature>
<organism>
    <name type="scientific">Coxiella burnetii (strain RSA 493 / Nine Mile phase I)</name>
    <dbReference type="NCBI Taxonomy" id="227377"/>
    <lineage>
        <taxon>Bacteria</taxon>
        <taxon>Pseudomonadati</taxon>
        <taxon>Pseudomonadota</taxon>
        <taxon>Gammaproteobacteria</taxon>
        <taxon>Legionellales</taxon>
        <taxon>Coxiellaceae</taxon>
        <taxon>Coxiella</taxon>
    </lineage>
</organism>
<keyword id="KW-0472">Membrane</keyword>
<keyword id="KW-1185">Reference proteome</keyword>
<keyword id="KW-0812">Transmembrane</keyword>
<keyword id="KW-1133">Transmembrane helix</keyword>
<comment type="subcellular location">
    <subcellularLocation>
        <location evidence="2">Membrane</location>
        <topology evidence="2">Multi-pass membrane protein</topology>
    </subcellularLocation>
</comment>
<dbReference type="EMBL" id="AE016828">
    <property type="protein sequence ID" value="AAO91312.1"/>
    <property type="molecule type" value="Genomic_DNA"/>
</dbReference>
<dbReference type="RefSeq" id="NP_820798.1">
    <property type="nucleotide sequence ID" value="NC_002971.4"/>
</dbReference>
<dbReference type="RefSeq" id="WP_010958463.1">
    <property type="nucleotide sequence ID" value="NC_002971.4"/>
</dbReference>
<dbReference type="SMR" id="Q83AR1"/>
<dbReference type="EnsemblBacteria" id="AAO91312">
    <property type="protein sequence ID" value="AAO91312"/>
    <property type="gene ID" value="CBU_1819"/>
</dbReference>
<dbReference type="GeneID" id="1209730"/>
<dbReference type="KEGG" id="cbu:CBU_1819"/>
<dbReference type="PATRIC" id="fig|227377.7.peg.1805"/>
<dbReference type="HOGENOM" id="CLU_733027_0_0_6"/>
<dbReference type="Proteomes" id="UP000002671">
    <property type="component" value="Chromosome"/>
</dbReference>
<dbReference type="GO" id="GO:0016020">
    <property type="term" value="C:membrane"/>
    <property type="evidence" value="ECO:0007669"/>
    <property type="project" value="UniProtKB-SubCell"/>
</dbReference>
<evidence type="ECO:0000255" key="1"/>
<evidence type="ECO:0000305" key="2"/>
<proteinExistence type="predicted"/>
<protein>
    <recommendedName>
        <fullName>Uncharacterized protein CBU_1819</fullName>
    </recommendedName>
</protein>
<name>Y1819_COXBU</name>
<sequence>MRPIHMAGEEDLQPINLKISIYLESLNTERPSRYMNLMKERLQKKMEQQVKKQKSKSRSKAKEILTNNSKIIATATSVPLTVGAYGILVGSATPFLASQTNSFIQSSVHRGFENLTGSGLMSTIMNPISNGLSSVLGNTAEAAITIATPIAVLYFVPTLFRLFFYVSKKMVHLLANLFDSTESHSLNSEYFESGLPLLTLLCNLSTLAIIDDLTLRLKAVGIEKISINLIKLKNKILNKENSNLNVEEKMLYDLAKKNSEKLIALALKIGEEKIFKRIQSLESVTSLKAQIQKFIPKVDMWANGKIDFWITVMGALIDKESVQARETFFNTLQSISTLKTPNAPNPHSLFQLDMEPRHKQREKFSPTDQPTYGRQAF</sequence>
<gene>
    <name type="ordered locus">CBU_1819</name>
</gene>